<protein>
    <recommendedName>
        <fullName evidence="1">Acyl carrier protein</fullName>
        <shortName evidence="1">ACP</shortName>
    </recommendedName>
</protein>
<sequence length="78" mass="8301">MSDTAERVKKIVVEHLGVDADKVTEGASFIDDLGADSLDTVELVMAFEEEFGVEIPDDAAETILTVGDAVKFIDKASA</sequence>
<feature type="chain" id="PRO_1000139005" description="Acyl carrier protein">
    <location>
        <begin position="1"/>
        <end position="78"/>
    </location>
</feature>
<feature type="domain" description="Carrier" evidence="2">
    <location>
        <begin position="2"/>
        <end position="77"/>
    </location>
</feature>
<feature type="modified residue" description="O-(pantetheine 4'-phosphoryl)serine" evidence="2">
    <location>
        <position position="37"/>
    </location>
</feature>
<keyword id="KW-0963">Cytoplasm</keyword>
<keyword id="KW-0275">Fatty acid biosynthesis</keyword>
<keyword id="KW-0276">Fatty acid metabolism</keyword>
<keyword id="KW-0444">Lipid biosynthesis</keyword>
<keyword id="KW-0443">Lipid metabolism</keyword>
<keyword id="KW-0596">Phosphopantetheine</keyword>
<keyword id="KW-0597">Phosphoprotein</keyword>
<name>ACP_BRUA1</name>
<gene>
    <name evidence="1" type="primary">acpP</name>
    <name type="ordered locus">BAbS19_I04480</name>
</gene>
<dbReference type="EMBL" id="CP000887">
    <property type="protein sequence ID" value="ACD71987.1"/>
    <property type="molecule type" value="Genomic_DNA"/>
</dbReference>
<dbReference type="RefSeq" id="WP_002963616.1">
    <property type="nucleotide sequence ID" value="NC_010742.1"/>
</dbReference>
<dbReference type="BMRB" id="B2S9V7"/>
<dbReference type="SMR" id="B2S9V7"/>
<dbReference type="KEGG" id="bmc:BAbS19_I04480"/>
<dbReference type="HOGENOM" id="CLU_108696_5_1_5"/>
<dbReference type="UniPathway" id="UPA00094"/>
<dbReference type="Proteomes" id="UP000002565">
    <property type="component" value="Chromosome 1"/>
</dbReference>
<dbReference type="GO" id="GO:0005829">
    <property type="term" value="C:cytosol"/>
    <property type="evidence" value="ECO:0007669"/>
    <property type="project" value="TreeGrafter"/>
</dbReference>
<dbReference type="GO" id="GO:0016020">
    <property type="term" value="C:membrane"/>
    <property type="evidence" value="ECO:0007669"/>
    <property type="project" value="GOC"/>
</dbReference>
<dbReference type="GO" id="GO:0000035">
    <property type="term" value="F:acyl binding"/>
    <property type="evidence" value="ECO:0007669"/>
    <property type="project" value="TreeGrafter"/>
</dbReference>
<dbReference type="GO" id="GO:0000036">
    <property type="term" value="F:acyl carrier activity"/>
    <property type="evidence" value="ECO:0007669"/>
    <property type="project" value="UniProtKB-UniRule"/>
</dbReference>
<dbReference type="GO" id="GO:0031177">
    <property type="term" value="F:phosphopantetheine binding"/>
    <property type="evidence" value="ECO:0007669"/>
    <property type="project" value="InterPro"/>
</dbReference>
<dbReference type="GO" id="GO:0009245">
    <property type="term" value="P:lipid A biosynthetic process"/>
    <property type="evidence" value="ECO:0007669"/>
    <property type="project" value="TreeGrafter"/>
</dbReference>
<dbReference type="FunFam" id="1.10.1200.10:FF:000001">
    <property type="entry name" value="Acyl carrier protein"/>
    <property type="match status" value="1"/>
</dbReference>
<dbReference type="Gene3D" id="1.10.1200.10">
    <property type="entry name" value="ACP-like"/>
    <property type="match status" value="1"/>
</dbReference>
<dbReference type="HAMAP" id="MF_01217">
    <property type="entry name" value="Acyl_carrier"/>
    <property type="match status" value="1"/>
</dbReference>
<dbReference type="InterPro" id="IPR003231">
    <property type="entry name" value="ACP"/>
</dbReference>
<dbReference type="InterPro" id="IPR036736">
    <property type="entry name" value="ACP-like_sf"/>
</dbReference>
<dbReference type="InterPro" id="IPR020806">
    <property type="entry name" value="PKS_PP-bd"/>
</dbReference>
<dbReference type="InterPro" id="IPR009081">
    <property type="entry name" value="PP-bd_ACP"/>
</dbReference>
<dbReference type="InterPro" id="IPR006162">
    <property type="entry name" value="Ppantetheine_attach_site"/>
</dbReference>
<dbReference type="NCBIfam" id="TIGR00517">
    <property type="entry name" value="acyl_carrier"/>
    <property type="match status" value="1"/>
</dbReference>
<dbReference type="NCBIfam" id="NF002148">
    <property type="entry name" value="PRK00982.1-2"/>
    <property type="match status" value="1"/>
</dbReference>
<dbReference type="NCBIfam" id="NF002149">
    <property type="entry name" value="PRK00982.1-3"/>
    <property type="match status" value="1"/>
</dbReference>
<dbReference type="NCBIfam" id="NF002150">
    <property type="entry name" value="PRK00982.1-4"/>
    <property type="match status" value="1"/>
</dbReference>
<dbReference type="NCBIfam" id="NF002151">
    <property type="entry name" value="PRK00982.1-5"/>
    <property type="match status" value="1"/>
</dbReference>
<dbReference type="PANTHER" id="PTHR20863">
    <property type="entry name" value="ACYL CARRIER PROTEIN"/>
    <property type="match status" value="1"/>
</dbReference>
<dbReference type="PANTHER" id="PTHR20863:SF76">
    <property type="entry name" value="CARRIER DOMAIN-CONTAINING PROTEIN"/>
    <property type="match status" value="1"/>
</dbReference>
<dbReference type="Pfam" id="PF00550">
    <property type="entry name" value="PP-binding"/>
    <property type="match status" value="1"/>
</dbReference>
<dbReference type="SMART" id="SM00823">
    <property type="entry name" value="PKS_PP"/>
    <property type="match status" value="1"/>
</dbReference>
<dbReference type="SUPFAM" id="SSF47336">
    <property type="entry name" value="ACP-like"/>
    <property type="match status" value="1"/>
</dbReference>
<dbReference type="PROSITE" id="PS50075">
    <property type="entry name" value="CARRIER"/>
    <property type="match status" value="1"/>
</dbReference>
<dbReference type="PROSITE" id="PS00012">
    <property type="entry name" value="PHOSPHOPANTETHEINE"/>
    <property type="match status" value="1"/>
</dbReference>
<evidence type="ECO:0000255" key="1">
    <source>
        <dbReference type="HAMAP-Rule" id="MF_01217"/>
    </source>
</evidence>
<evidence type="ECO:0000255" key="2">
    <source>
        <dbReference type="PROSITE-ProRule" id="PRU00258"/>
    </source>
</evidence>
<proteinExistence type="inferred from homology"/>
<comment type="function">
    <text evidence="1">Carrier of the growing fatty acid chain in fatty acid biosynthesis.</text>
</comment>
<comment type="pathway">
    <text evidence="1">Lipid metabolism; fatty acid biosynthesis.</text>
</comment>
<comment type="subcellular location">
    <subcellularLocation>
        <location evidence="1">Cytoplasm</location>
    </subcellularLocation>
</comment>
<comment type="PTM">
    <text evidence="1">4'-phosphopantetheine is transferred from CoA to a specific serine of apo-ACP by AcpS. This modification is essential for activity because fatty acids are bound in thioester linkage to the sulfhydryl of the prosthetic group.</text>
</comment>
<comment type="similarity">
    <text evidence="1">Belongs to the acyl carrier protein (ACP) family.</text>
</comment>
<organism>
    <name type="scientific">Brucella abortus (strain S19)</name>
    <dbReference type="NCBI Taxonomy" id="430066"/>
    <lineage>
        <taxon>Bacteria</taxon>
        <taxon>Pseudomonadati</taxon>
        <taxon>Pseudomonadota</taxon>
        <taxon>Alphaproteobacteria</taxon>
        <taxon>Hyphomicrobiales</taxon>
        <taxon>Brucellaceae</taxon>
        <taxon>Brucella/Ochrobactrum group</taxon>
        <taxon>Brucella</taxon>
    </lineage>
</organism>
<reference key="1">
    <citation type="journal article" date="2008" name="PLoS ONE">
        <title>Genome sequence of Brucella abortus vaccine strain S19 compared to virulent strains yields candidate virulence genes.</title>
        <authorList>
            <person name="Crasta O.R."/>
            <person name="Folkerts O."/>
            <person name="Fei Z."/>
            <person name="Mane S.P."/>
            <person name="Evans C."/>
            <person name="Martino-Catt S."/>
            <person name="Bricker B."/>
            <person name="Yu G."/>
            <person name="Du L."/>
            <person name="Sobral B.W."/>
        </authorList>
    </citation>
    <scope>NUCLEOTIDE SEQUENCE [LARGE SCALE GENOMIC DNA]</scope>
    <source>
        <strain>S19</strain>
    </source>
</reference>
<accession>B2S9V7</accession>